<protein>
    <recommendedName>
        <fullName evidence="1">Oxygen-dependent coproporphyrinogen-III oxidase</fullName>
        <shortName evidence="1">CPO</shortName>
        <shortName evidence="1">Coprogen oxidase</shortName>
        <shortName evidence="1">Coproporphyrinogenase</shortName>
        <ecNumber evidence="1">1.3.3.3</ecNumber>
    </recommendedName>
</protein>
<accession>Q3AMK3</accession>
<comment type="function">
    <text evidence="1">Involved in the heme and chlorophyll biosynthesis. Catalyzes the aerobic oxidative decarboxylation of propionate groups of rings A and B of coproporphyrinogen-III to yield the vinyl groups in protoporphyrinogen-IX.</text>
</comment>
<comment type="catalytic activity">
    <reaction evidence="1">
        <text>coproporphyrinogen III + O2 + 2 H(+) = protoporphyrinogen IX + 2 CO2 + 2 H2O</text>
        <dbReference type="Rhea" id="RHEA:18257"/>
        <dbReference type="ChEBI" id="CHEBI:15377"/>
        <dbReference type="ChEBI" id="CHEBI:15378"/>
        <dbReference type="ChEBI" id="CHEBI:15379"/>
        <dbReference type="ChEBI" id="CHEBI:16526"/>
        <dbReference type="ChEBI" id="CHEBI:57307"/>
        <dbReference type="ChEBI" id="CHEBI:57309"/>
        <dbReference type="EC" id="1.3.3.3"/>
    </reaction>
</comment>
<comment type="cofactor">
    <cofactor evidence="1">
        <name>a divalent metal cation</name>
        <dbReference type="ChEBI" id="CHEBI:60240"/>
    </cofactor>
</comment>
<comment type="pathway">
    <text evidence="1">Porphyrin-containing compound metabolism; protoporphyrin-IX biosynthesis; protoporphyrinogen-IX from coproporphyrinogen-III (O2 route): step 1/1.</text>
</comment>
<comment type="subunit">
    <text evidence="1">Homodimer.</text>
</comment>
<comment type="subcellular location">
    <subcellularLocation>
        <location evidence="1">Cytoplasm</location>
    </subcellularLocation>
</comment>
<comment type="similarity">
    <text evidence="1">Belongs to the aerobic coproporphyrinogen-III oxidase family.</text>
</comment>
<dbReference type="EC" id="1.3.3.3" evidence="1"/>
<dbReference type="EMBL" id="CP000110">
    <property type="protein sequence ID" value="ABB34179.1"/>
    <property type="molecule type" value="Genomic_DNA"/>
</dbReference>
<dbReference type="RefSeq" id="WP_011363416.1">
    <property type="nucleotide sequence ID" value="NC_007516.1"/>
</dbReference>
<dbReference type="SMR" id="Q3AMK3"/>
<dbReference type="STRING" id="110662.Syncc9605_0403"/>
<dbReference type="KEGG" id="syd:Syncc9605_0403"/>
<dbReference type="eggNOG" id="COG0408">
    <property type="taxonomic scope" value="Bacteria"/>
</dbReference>
<dbReference type="HOGENOM" id="CLU_026169_0_1_3"/>
<dbReference type="OrthoDB" id="9777553at2"/>
<dbReference type="UniPathway" id="UPA00251">
    <property type="reaction ID" value="UER00322"/>
</dbReference>
<dbReference type="GO" id="GO:0005737">
    <property type="term" value="C:cytoplasm"/>
    <property type="evidence" value="ECO:0007669"/>
    <property type="project" value="UniProtKB-SubCell"/>
</dbReference>
<dbReference type="GO" id="GO:0004109">
    <property type="term" value="F:coproporphyrinogen oxidase activity"/>
    <property type="evidence" value="ECO:0007669"/>
    <property type="project" value="UniProtKB-UniRule"/>
</dbReference>
<dbReference type="GO" id="GO:0046872">
    <property type="term" value="F:metal ion binding"/>
    <property type="evidence" value="ECO:0007669"/>
    <property type="project" value="UniProtKB-KW"/>
</dbReference>
<dbReference type="GO" id="GO:0042803">
    <property type="term" value="F:protein homodimerization activity"/>
    <property type="evidence" value="ECO:0000250"/>
    <property type="project" value="UniProtKB"/>
</dbReference>
<dbReference type="GO" id="GO:0015995">
    <property type="term" value="P:chlorophyll biosynthetic process"/>
    <property type="evidence" value="ECO:0007669"/>
    <property type="project" value="UniProtKB-UniRule"/>
</dbReference>
<dbReference type="GO" id="GO:0006782">
    <property type="term" value="P:protoporphyrinogen IX biosynthetic process"/>
    <property type="evidence" value="ECO:0007669"/>
    <property type="project" value="UniProtKB-UniRule"/>
</dbReference>
<dbReference type="FunFam" id="3.40.1500.10:FF:000007">
    <property type="entry name" value="Oxygen-dependent coproporphyrinogen-III oxidase"/>
    <property type="match status" value="1"/>
</dbReference>
<dbReference type="Gene3D" id="3.40.1500.10">
    <property type="entry name" value="Coproporphyrinogen III oxidase, aerobic"/>
    <property type="match status" value="1"/>
</dbReference>
<dbReference type="HAMAP" id="MF_00333">
    <property type="entry name" value="Coprogen_oxidas"/>
    <property type="match status" value="1"/>
</dbReference>
<dbReference type="InterPro" id="IPR001260">
    <property type="entry name" value="Coprogen_oxidase_aer"/>
</dbReference>
<dbReference type="InterPro" id="IPR036406">
    <property type="entry name" value="Coprogen_oxidase_aer_sf"/>
</dbReference>
<dbReference type="InterPro" id="IPR018375">
    <property type="entry name" value="Coprogen_oxidase_CS"/>
</dbReference>
<dbReference type="NCBIfam" id="NF003727">
    <property type="entry name" value="PRK05330.1"/>
    <property type="match status" value="1"/>
</dbReference>
<dbReference type="PANTHER" id="PTHR10755">
    <property type="entry name" value="COPROPORPHYRINOGEN III OXIDASE, MITOCHONDRIAL"/>
    <property type="match status" value="1"/>
</dbReference>
<dbReference type="PANTHER" id="PTHR10755:SF0">
    <property type="entry name" value="OXYGEN-DEPENDENT COPROPORPHYRINOGEN-III OXIDASE, MITOCHONDRIAL"/>
    <property type="match status" value="1"/>
</dbReference>
<dbReference type="Pfam" id="PF01218">
    <property type="entry name" value="Coprogen_oxidas"/>
    <property type="match status" value="1"/>
</dbReference>
<dbReference type="PIRSF" id="PIRSF000166">
    <property type="entry name" value="Coproporphyri_ox"/>
    <property type="match status" value="1"/>
</dbReference>
<dbReference type="PRINTS" id="PR00073">
    <property type="entry name" value="COPRGNOXDASE"/>
</dbReference>
<dbReference type="SUPFAM" id="SSF102886">
    <property type="entry name" value="Coproporphyrinogen III oxidase"/>
    <property type="match status" value="1"/>
</dbReference>
<dbReference type="PROSITE" id="PS01021">
    <property type="entry name" value="COPROGEN_OXIDASE"/>
    <property type="match status" value="1"/>
</dbReference>
<gene>
    <name evidence="1" type="primary">hemF</name>
    <name type="ordered locus">Syncc9605_0403</name>
</gene>
<sequence length="362" mass="40973">MVRSLIRRVLGRQDVGVSNAPLELPPSDSRERARAMVMGLQDQICAGLEALDGEGRFVEESWVRHEGGGGRSRVMREGRVFEQGGVNFSEVQGEELPPSILKQRPEAKGHPWFATGTSMVLHPRNPYIPTVHLNYRYFEAGPVWWFGGGADLTPYYPFLDDARHFHRTHQAACDSVHPDLHKVFKPWCDEYFYLKHRGETRGVGGIFYDYQDANGTLYKGQDPSGPAAQVSASLGARPLSWEQLFSLGQANGRAFLPAYAPIVEKRHPMAYGDRERDFQLYRRGRYVEFNLVWDRGTIFGLQTNGRTESILMSLPPLVRWEYGYTAEAGSREALLTELFTKPQDWLGDASLDERCRPHGAIN</sequence>
<reference key="1">
    <citation type="submission" date="2005-07" db="EMBL/GenBank/DDBJ databases">
        <title>Complete sequence of Synechococcus sp. CC9605.</title>
        <authorList>
            <consortium name="US DOE Joint Genome Institute"/>
            <person name="Copeland A."/>
            <person name="Lucas S."/>
            <person name="Lapidus A."/>
            <person name="Barry K."/>
            <person name="Detter J.C."/>
            <person name="Glavina T."/>
            <person name="Hammon N."/>
            <person name="Israni S."/>
            <person name="Pitluck S."/>
            <person name="Schmutz J."/>
            <person name="Martinez M."/>
            <person name="Larimer F."/>
            <person name="Land M."/>
            <person name="Kyrpides N."/>
            <person name="Ivanova N."/>
            <person name="Richardson P."/>
        </authorList>
    </citation>
    <scope>NUCLEOTIDE SEQUENCE [LARGE SCALE GENOMIC DNA]</scope>
    <source>
        <strain>CC9605</strain>
    </source>
</reference>
<proteinExistence type="inferred from homology"/>
<keyword id="KW-0149">Chlorophyll biosynthesis</keyword>
<keyword id="KW-0963">Cytoplasm</keyword>
<keyword id="KW-0350">Heme biosynthesis</keyword>
<keyword id="KW-0479">Metal-binding</keyword>
<keyword id="KW-0560">Oxidoreductase</keyword>
<keyword id="KW-0627">Porphyrin biosynthesis</keyword>
<evidence type="ECO:0000255" key="1">
    <source>
        <dbReference type="HAMAP-Rule" id="MF_00333"/>
    </source>
</evidence>
<feature type="chain" id="PRO_1000119832" description="Oxygen-dependent coproporphyrinogen-III oxidase">
    <location>
        <begin position="1"/>
        <end position="362"/>
    </location>
</feature>
<feature type="region of interest" description="Important for dimerization" evidence="1">
    <location>
        <begin position="286"/>
        <end position="321"/>
    </location>
</feature>
<feature type="active site" description="Proton donor" evidence="1">
    <location>
        <position position="132"/>
    </location>
</feature>
<feature type="binding site" evidence="1">
    <location>
        <position position="118"/>
    </location>
    <ligand>
        <name>substrate</name>
    </ligand>
</feature>
<feature type="binding site" evidence="1">
    <location>
        <position position="122"/>
    </location>
    <ligand>
        <name>a divalent metal cation</name>
        <dbReference type="ChEBI" id="CHEBI:60240"/>
    </ligand>
</feature>
<feature type="binding site" evidence="1">
    <location>
        <position position="132"/>
    </location>
    <ligand>
        <name>a divalent metal cation</name>
        <dbReference type="ChEBI" id="CHEBI:60240"/>
    </ligand>
</feature>
<feature type="binding site" evidence="1">
    <location>
        <begin position="134"/>
        <end position="136"/>
    </location>
    <ligand>
        <name>substrate</name>
    </ligand>
</feature>
<feature type="binding site" evidence="1">
    <location>
        <position position="166"/>
    </location>
    <ligand>
        <name>a divalent metal cation</name>
        <dbReference type="ChEBI" id="CHEBI:60240"/>
    </ligand>
</feature>
<feature type="binding site" evidence="1">
    <location>
        <position position="196"/>
    </location>
    <ligand>
        <name>a divalent metal cation</name>
        <dbReference type="ChEBI" id="CHEBI:60240"/>
    </ligand>
</feature>
<feature type="site" description="Important for dimerization" evidence="1">
    <location>
        <position position="196"/>
    </location>
</feature>
<organism>
    <name type="scientific">Synechococcus sp. (strain CC9605)</name>
    <dbReference type="NCBI Taxonomy" id="110662"/>
    <lineage>
        <taxon>Bacteria</taxon>
        <taxon>Bacillati</taxon>
        <taxon>Cyanobacteriota</taxon>
        <taxon>Cyanophyceae</taxon>
        <taxon>Synechococcales</taxon>
        <taxon>Synechococcaceae</taxon>
        <taxon>Synechococcus</taxon>
    </lineage>
</organism>
<name>HEM6_SYNSC</name>